<evidence type="ECO:0000250" key="1"/>
<evidence type="ECO:0000250" key="2">
    <source>
        <dbReference type="UniProtKB" id="P00185"/>
    </source>
</evidence>
<evidence type="ECO:0000250" key="3">
    <source>
        <dbReference type="UniProtKB" id="P04798"/>
    </source>
</evidence>
<evidence type="ECO:0000305" key="4"/>
<reference key="1">
    <citation type="journal article" date="1991" name="J. Biochem.">
        <title>Hamster cytochrome P-450 IA gene family, P-450IA1 and P-450IA2 in lung and liver: cDNA cloning and sequence analysis.</title>
        <authorList>
            <person name="Sagami I."/>
            <person name="Ohmachi T."/>
            <person name="Fujii H."/>
            <person name="Kikuchi H."/>
            <person name="Watanabe M."/>
        </authorList>
    </citation>
    <scope>NUCLEOTIDE SEQUENCE [MRNA]</scope>
    <source>
        <tissue>Lung</tissue>
    </source>
</reference>
<reference key="2">
    <citation type="submission" date="1992-09" db="EMBL/GenBank/DDBJ databases">
        <title>Molecular cloning and expression of hamster cytochrome P450 1A1 and cytochrome P450 reductase.</title>
        <authorList>
            <person name="Ohgiya S."/>
            <person name="Goda T."/>
            <person name="Ishizaki K."/>
            <person name="Morimoto M."/>
            <person name="Sakamoto T."/>
            <person name="Kamataki T."/>
            <person name="Shinriki N."/>
        </authorList>
    </citation>
    <scope>NUCLEOTIDE SEQUENCE</scope>
</reference>
<protein>
    <recommendedName>
        <fullName>Cytochrome P450 1A1</fullName>
        <ecNumber evidence="3">1.14.14.1</ecNumber>
    </recommendedName>
    <alternativeName>
        <fullName>CYPIA1</fullName>
    </alternativeName>
    <alternativeName>
        <fullName>Cytochrome P-450MC</fullName>
    </alternativeName>
    <alternativeName>
        <fullName>Cytochrome P450 form 6</fullName>
    </alternativeName>
    <alternativeName>
        <fullName>Cytochrome P450-C</fullName>
    </alternativeName>
    <alternativeName>
        <fullName>Cytochrome P450-P1</fullName>
    </alternativeName>
    <alternativeName>
        <fullName>Hydroperoxy icosatetraenoate dehydratase</fullName>
        <ecNumber evidence="3">4.2.1.152</ecNumber>
    </alternativeName>
</protein>
<proteinExistence type="evidence at transcript level"/>
<feature type="chain" id="PRO_0000051630" description="Cytochrome P450 1A1">
    <location>
        <begin position="1"/>
        <end position="524"/>
    </location>
</feature>
<feature type="region of interest" description="Mitochondrial targeting signal" evidence="2">
    <location>
        <begin position="33"/>
        <end position="44"/>
    </location>
</feature>
<feature type="binding site" evidence="1">
    <location>
        <position position="228"/>
    </location>
    <ligand>
        <name>substrate</name>
    </ligand>
</feature>
<feature type="binding site" description="axial binding residue" evidence="1">
    <location>
        <position position="461"/>
    </location>
    <ligand>
        <name>heme</name>
        <dbReference type="ChEBI" id="CHEBI:30413"/>
    </ligand>
    <ligandPart>
        <name>Fe</name>
        <dbReference type="ChEBI" id="CHEBI:18248"/>
    </ligandPart>
</feature>
<feature type="glycosylation site" description="O-linked (GlcNAc) serine" evidence="1">
    <location>
        <position position="71"/>
    </location>
</feature>
<feature type="sequence conflict" description="In Ref. 1; BAA01096." evidence="4" ref="1">
    <original>L</original>
    <variation>V</variation>
    <location>
        <position position="18"/>
    </location>
</feature>
<feature type="sequence conflict" description="In Ref. 1; BAA01096." evidence="4" ref="1">
    <original>H</original>
    <variation>Y</variation>
    <location>
        <position position="521"/>
    </location>
</feature>
<sequence length="524" mass="59136">MSSIYGLLNFMSATELLLAITVFCLGFWVVRALRTQVPKGLKTPPGPWGLPILGHVLTLGKNPHLSLTKLSKQYGDVLQIRIGSTPVVVLSGLDTIRQALVRQGDDFKGRPDFYSFTLITNGKSMTFNPDCGPVWAARRRLAQDALKSFSIALDPASASSCYLEEYVIKEADYLISKFQKLMAEVGHFDPDRYLVVSVTNVICAMCFGQRYDHDDQELLSIVNLSNEFGKVTGSGYPPDFIPILRYLPNSSLDAFKDLNKKFYSFMQKSVKEHYRTFEKGHIRDITDSLIEHCQDKSLDENANVQLSDDRVINIIVDLFGAGFDTVTTAISWSLMYLVTNPGVQRKIQEELDTVIGRSRRPRLCDRSQLPYLEAFILETFRHSSFLPFTIPHSTTRDTSLCGFYIPKGHCVFVNQWQINHNQELWGDPNKFRPERFLTSSGTLDKVLSGKVTLFGLGKRKCIGETIGRLEVFLFLAILLQQIEFTVSPGEKVDMTPIYGLTLKHARCEYFQAQTRSSGPQHPQA</sequence>
<name>CP1A1_MESAU</name>
<gene>
    <name type="primary">CYP1A1</name>
</gene>
<accession>Q00557</accession>
<accession>Q64665</accession>
<dbReference type="EC" id="1.14.14.1" evidence="3"/>
<dbReference type="EC" id="4.2.1.152" evidence="3"/>
<dbReference type="EMBL" id="D10251">
    <property type="protein sequence ID" value="BAA01096.1"/>
    <property type="molecule type" value="mRNA"/>
</dbReference>
<dbReference type="EMBL" id="D12977">
    <property type="protein sequence ID" value="BAA02354.1"/>
    <property type="molecule type" value="mRNA"/>
</dbReference>
<dbReference type="EMBL" id="D10913">
    <property type="protein sequence ID" value="BAA01717.1"/>
    <property type="molecule type" value="Genomic_DNA"/>
</dbReference>
<dbReference type="PIR" id="JX0189">
    <property type="entry name" value="JX0189"/>
</dbReference>
<dbReference type="RefSeq" id="NP_001268352.1">
    <property type="nucleotide sequence ID" value="NM_001281423.1"/>
</dbReference>
<dbReference type="SMR" id="Q00557"/>
<dbReference type="STRING" id="10036.ENSMAUP00000012248"/>
<dbReference type="GlyCosmos" id="Q00557">
    <property type="glycosylation" value="1 site, No reported glycans"/>
</dbReference>
<dbReference type="GeneID" id="101844540"/>
<dbReference type="KEGG" id="maua:101844540"/>
<dbReference type="eggNOG" id="KOG0156">
    <property type="taxonomic scope" value="Eukaryota"/>
</dbReference>
<dbReference type="OrthoDB" id="1055148at2759"/>
<dbReference type="UniPathway" id="UPA00199"/>
<dbReference type="UniPathway" id="UPA00912"/>
<dbReference type="Proteomes" id="UP000189706">
    <property type="component" value="Unplaced"/>
</dbReference>
<dbReference type="GO" id="GO:0005789">
    <property type="term" value="C:endoplasmic reticulum membrane"/>
    <property type="evidence" value="ECO:0007669"/>
    <property type="project" value="UniProtKB-SubCell"/>
</dbReference>
<dbReference type="GO" id="GO:0005743">
    <property type="term" value="C:mitochondrial inner membrane"/>
    <property type="evidence" value="ECO:0000250"/>
    <property type="project" value="UniProtKB"/>
</dbReference>
<dbReference type="GO" id="GO:0101020">
    <property type="term" value="F:estrogen 16-alpha-hydroxylase activity"/>
    <property type="evidence" value="ECO:0000250"/>
    <property type="project" value="UniProtKB"/>
</dbReference>
<dbReference type="GO" id="GO:0101021">
    <property type="term" value="F:estrogen 2-hydroxylase activity"/>
    <property type="evidence" value="ECO:0000250"/>
    <property type="project" value="UniProtKB"/>
</dbReference>
<dbReference type="GO" id="GO:0020037">
    <property type="term" value="F:heme binding"/>
    <property type="evidence" value="ECO:0007669"/>
    <property type="project" value="InterPro"/>
</dbReference>
<dbReference type="GO" id="GO:0030544">
    <property type="term" value="F:Hsp70 protein binding"/>
    <property type="evidence" value="ECO:0000250"/>
    <property type="project" value="UniProtKB"/>
</dbReference>
<dbReference type="GO" id="GO:0051879">
    <property type="term" value="F:Hsp90 protein binding"/>
    <property type="evidence" value="ECO:0000250"/>
    <property type="project" value="UniProtKB"/>
</dbReference>
<dbReference type="GO" id="GO:0106256">
    <property type="term" value="F:hydroperoxy icosatetraenoate dehydratase activity"/>
    <property type="evidence" value="ECO:0007669"/>
    <property type="project" value="UniProtKB-EC"/>
</dbReference>
<dbReference type="GO" id="GO:0005506">
    <property type="term" value="F:iron ion binding"/>
    <property type="evidence" value="ECO:0007669"/>
    <property type="project" value="InterPro"/>
</dbReference>
<dbReference type="GO" id="GO:0004508">
    <property type="term" value="F:steroid 17-alpha-monooxygenase activity"/>
    <property type="evidence" value="ECO:0007669"/>
    <property type="project" value="TreeGrafter"/>
</dbReference>
<dbReference type="GO" id="GO:0008210">
    <property type="term" value="P:estrogen metabolic process"/>
    <property type="evidence" value="ECO:0000250"/>
    <property type="project" value="UniProtKB"/>
</dbReference>
<dbReference type="GO" id="GO:0006631">
    <property type="term" value="P:fatty acid metabolic process"/>
    <property type="evidence" value="ECO:0007669"/>
    <property type="project" value="UniProtKB-UniPathway"/>
</dbReference>
<dbReference type="GO" id="GO:0042446">
    <property type="term" value="P:hormone biosynthetic process"/>
    <property type="evidence" value="ECO:0007669"/>
    <property type="project" value="TreeGrafter"/>
</dbReference>
<dbReference type="GO" id="GO:0042448">
    <property type="term" value="P:progesterone metabolic process"/>
    <property type="evidence" value="ECO:0007669"/>
    <property type="project" value="TreeGrafter"/>
</dbReference>
<dbReference type="GO" id="GO:0042572">
    <property type="term" value="P:retinol metabolic process"/>
    <property type="evidence" value="ECO:0000250"/>
    <property type="project" value="UniProtKB"/>
</dbReference>
<dbReference type="GO" id="GO:0006694">
    <property type="term" value="P:steroid biosynthetic process"/>
    <property type="evidence" value="ECO:0007669"/>
    <property type="project" value="UniProtKB-KW"/>
</dbReference>
<dbReference type="CDD" id="cd20676">
    <property type="entry name" value="CYP1A"/>
    <property type="match status" value="1"/>
</dbReference>
<dbReference type="FunFam" id="1.10.630.10:FF:000002">
    <property type="entry name" value="Cytochrome P450 1A1"/>
    <property type="match status" value="1"/>
</dbReference>
<dbReference type="Gene3D" id="1.10.630.10">
    <property type="entry name" value="Cytochrome P450"/>
    <property type="match status" value="1"/>
</dbReference>
<dbReference type="InterPro" id="IPR001128">
    <property type="entry name" value="Cyt_P450"/>
</dbReference>
<dbReference type="InterPro" id="IPR017972">
    <property type="entry name" value="Cyt_P450_CS"/>
</dbReference>
<dbReference type="InterPro" id="IPR002401">
    <property type="entry name" value="Cyt_P450_E_grp-I"/>
</dbReference>
<dbReference type="InterPro" id="IPR008066">
    <property type="entry name" value="Cyt_P450_E_grp-I_CYP1"/>
</dbReference>
<dbReference type="InterPro" id="IPR036396">
    <property type="entry name" value="Cyt_P450_sf"/>
</dbReference>
<dbReference type="PANTHER" id="PTHR24289:SF21">
    <property type="entry name" value="CYTOCHROME P450 1A"/>
    <property type="match status" value="1"/>
</dbReference>
<dbReference type="PANTHER" id="PTHR24289">
    <property type="entry name" value="STEROID 17-ALPHA-HYDROXYLASE/17,20 LYASE"/>
    <property type="match status" value="1"/>
</dbReference>
<dbReference type="Pfam" id="PF00067">
    <property type="entry name" value="p450"/>
    <property type="match status" value="1"/>
</dbReference>
<dbReference type="PRINTS" id="PR00463">
    <property type="entry name" value="EP450I"/>
</dbReference>
<dbReference type="PRINTS" id="PR01683">
    <property type="entry name" value="EP450ICYP1A"/>
</dbReference>
<dbReference type="PRINTS" id="PR00385">
    <property type="entry name" value="P450"/>
</dbReference>
<dbReference type="SUPFAM" id="SSF48264">
    <property type="entry name" value="Cytochrome P450"/>
    <property type="match status" value="1"/>
</dbReference>
<dbReference type="PROSITE" id="PS00086">
    <property type="entry name" value="CYTOCHROME_P450"/>
    <property type="match status" value="1"/>
</dbReference>
<comment type="function">
    <text evidence="3">A cytochrome P450 monooxygenase involved in the metabolism of various endogenous substrates, including fatty acids, steroid hormones and vitamins. Mechanistically, uses molecular oxygen inserting one oxygen atom into a substrate, and reducing the second into a water molecule, with two electrons provided by NADPH via cytochrome P450 reductase (CPR; NADPH-ferrihemoprotein reductase). Catalyzes the hydroxylation of carbon-hydrogen bonds. Exhibits high catalytic activity for the formation of hydroxyestrogens from estrone (E1) and 17beta-estradiol (E2), namely 2-hydroxy E1 and E2, as well as D-ring hydroxylated E1 and E2 at the C15alpha and C16alpha positions. Displays different regioselectivities for polyunsaturated fatty acids (PUFA) hydroxylation. Catalyzes the epoxidation of double bonds of certain PUFA. Converts arachidonic acid toward epoxyeicosatrienoic acid (EET) regioisomers, 8,9-, 11,12-, and 14,15-EET, that function as lipid mediators in the vascular system. Displays an absolute stereoselectivity in the epoxidation of eicosapentaenoic acid (EPA) producing the 17(R),18(S) enantiomer. May play an important role in all-trans retinoic acid biosynthesis in extrahepatic tissues. Catalyzes two successive oxidative transformation of all-trans retinol to all-trans retinal and then to the active form all-trans retinoic acid. May also participate in eicosanoids metabolism by converting hydroperoxide species into oxo metabolites (lipoxygenase-like reaction, NADPH-independent).</text>
</comment>
<comment type="catalytic activity">
    <reaction evidence="3">
        <text>an organic molecule + reduced [NADPH--hemoprotein reductase] + O2 = an alcohol + oxidized [NADPH--hemoprotein reductase] + H2O + H(+)</text>
        <dbReference type="Rhea" id="RHEA:17149"/>
        <dbReference type="Rhea" id="RHEA-COMP:11964"/>
        <dbReference type="Rhea" id="RHEA-COMP:11965"/>
        <dbReference type="ChEBI" id="CHEBI:15377"/>
        <dbReference type="ChEBI" id="CHEBI:15378"/>
        <dbReference type="ChEBI" id="CHEBI:15379"/>
        <dbReference type="ChEBI" id="CHEBI:30879"/>
        <dbReference type="ChEBI" id="CHEBI:57618"/>
        <dbReference type="ChEBI" id="CHEBI:58210"/>
        <dbReference type="ChEBI" id="CHEBI:142491"/>
        <dbReference type="EC" id="1.14.14.1"/>
    </reaction>
    <physiologicalReaction direction="right-to-left" evidence="3">
        <dbReference type="Rhea" id="RHEA:17151"/>
    </physiologicalReaction>
</comment>
<comment type="catalytic activity">
    <reaction evidence="3">
        <text>estrone + reduced [NADPH--hemoprotein reductase] + O2 = 2-hydroxyestrone + oxidized [NADPH--hemoprotein reductase] + H2O + H(+)</text>
        <dbReference type="Rhea" id="RHEA:47208"/>
        <dbReference type="Rhea" id="RHEA-COMP:11964"/>
        <dbReference type="Rhea" id="RHEA-COMP:11965"/>
        <dbReference type="ChEBI" id="CHEBI:1156"/>
        <dbReference type="ChEBI" id="CHEBI:15377"/>
        <dbReference type="ChEBI" id="CHEBI:15378"/>
        <dbReference type="ChEBI" id="CHEBI:15379"/>
        <dbReference type="ChEBI" id="CHEBI:17263"/>
        <dbReference type="ChEBI" id="CHEBI:57618"/>
        <dbReference type="ChEBI" id="CHEBI:58210"/>
    </reaction>
    <physiologicalReaction direction="left-to-right" evidence="3">
        <dbReference type="Rhea" id="RHEA:47209"/>
    </physiologicalReaction>
</comment>
<comment type="catalytic activity">
    <reaction evidence="3">
        <text>estrone + reduced [NADPH--hemoprotein reductase] + O2 = 4-hydroxyestrone + oxidized [NADPH--hemoprotein reductase] + H2O + H(+)</text>
        <dbReference type="Rhea" id="RHEA:47292"/>
        <dbReference type="Rhea" id="RHEA-COMP:11964"/>
        <dbReference type="Rhea" id="RHEA-COMP:11965"/>
        <dbReference type="ChEBI" id="CHEBI:15377"/>
        <dbReference type="ChEBI" id="CHEBI:15378"/>
        <dbReference type="ChEBI" id="CHEBI:15379"/>
        <dbReference type="ChEBI" id="CHEBI:17263"/>
        <dbReference type="ChEBI" id="CHEBI:57618"/>
        <dbReference type="ChEBI" id="CHEBI:58210"/>
        <dbReference type="ChEBI" id="CHEBI:87602"/>
    </reaction>
    <physiologicalReaction direction="left-to-right" evidence="3">
        <dbReference type="Rhea" id="RHEA:47293"/>
    </physiologicalReaction>
</comment>
<comment type="catalytic activity">
    <reaction evidence="3">
        <text>estrone + reduced [NADPH--hemoprotein reductase] + O2 = 6alpha-hydroxyestrone + oxidized [NADPH--hemoprotein reductase] + H2O + H(+)</text>
        <dbReference type="Rhea" id="RHEA:47308"/>
        <dbReference type="Rhea" id="RHEA-COMP:11964"/>
        <dbReference type="Rhea" id="RHEA-COMP:11965"/>
        <dbReference type="ChEBI" id="CHEBI:15377"/>
        <dbReference type="ChEBI" id="CHEBI:15378"/>
        <dbReference type="ChEBI" id="CHEBI:15379"/>
        <dbReference type="ChEBI" id="CHEBI:17263"/>
        <dbReference type="ChEBI" id="CHEBI:57618"/>
        <dbReference type="ChEBI" id="CHEBI:58210"/>
        <dbReference type="ChEBI" id="CHEBI:87605"/>
    </reaction>
    <physiologicalReaction direction="left-to-right" evidence="3">
        <dbReference type="Rhea" id="RHEA:47309"/>
    </physiologicalReaction>
</comment>
<comment type="catalytic activity">
    <reaction evidence="3">
        <text>estrone + reduced [NADPH--hemoprotein reductase] + O2 = 15alpha-hydroxyestrone + oxidized [NADPH--hemoprotein reductase] + H2O + H(+)</text>
        <dbReference type="Rhea" id="RHEA:47312"/>
        <dbReference type="Rhea" id="RHEA-COMP:11964"/>
        <dbReference type="Rhea" id="RHEA-COMP:11965"/>
        <dbReference type="ChEBI" id="CHEBI:15377"/>
        <dbReference type="ChEBI" id="CHEBI:15378"/>
        <dbReference type="ChEBI" id="CHEBI:15379"/>
        <dbReference type="ChEBI" id="CHEBI:17263"/>
        <dbReference type="ChEBI" id="CHEBI:57618"/>
        <dbReference type="ChEBI" id="CHEBI:58210"/>
        <dbReference type="ChEBI" id="CHEBI:87618"/>
    </reaction>
    <physiologicalReaction direction="left-to-right" evidence="3">
        <dbReference type="Rhea" id="RHEA:47313"/>
    </physiologicalReaction>
</comment>
<comment type="catalytic activity">
    <reaction evidence="3">
        <text>estrone + reduced [NADPH--hemoprotein reductase] + O2 = 16alpha-hydroxyestrone + oxidized [NADPH--hemoprotein reductase] + H2O + H(+)</text>
        <dbReference type="Rhea" id="RHEA:47204"/>
        <dbReference type="Rhea" id="RHEA-COMP:11964"/>
        <dbReference type="Rhea" id="RHEA-COMP:11965"/>
        <dbReference type="ChEBI" id="CHEBI:776"/>
        <dbReference type="ChEBI" id="CHEBI:15377"/>
        <dbReference type="ChEBI" id="CHEBI:15378"/>
        <dbReference type="ChEBI" id="CHEBI:15379"/>
        <dbReference type="ChEBI" id="CHEBI:17263"/>
        <dbReference type="ChEBI" id="CHEBI:57618"/>
        <dbReference type="ChEBI" id="CHEBI:58210"/>
    </reaction>
    <physiologicalReaction direction="left-to-right" evidence="3">
        <dbReference type="Rhea" id="RHEA:47205"/>
    </physiologicalReaction>
</comment>
<comment type="catalytic activity">
    <reaction evidence="3">
        <text>17beta-estradiol + reduced [NADPH--hemoprotein reductase] + O2 = 2-hydroxy-17beta-estradiol + oxidized [NADPH--hemoprotein reductase] + H2O + H(+)</text>
        <dbReference type="Rhea" id="RHEA:47212"/>
        <dbReference type="Rhea" id="RHEA-COMP:11964"/>
        <dbReference type="Rhea" id="RHEA-COMP:11965"/>
        <dbReference type="ChEBI" id="CHEBI:15377"/>
        <dbReference type="ChEBI" id="CHEBI:15378"/>
        <dbReference type="ChEBI" id="CHEBI:15379"/>
        <dbReference type="ChEBI" id="CHEBI:16469"/>
        <dbReference type="ChEBI" id="CHEBI:28744"/>
        <dbReference type="ChEBI" id="CHEBI:57618"/>
        <dbReference type="ChEBI" id="CHEBI:58210"/>
    </reaction>
    <physiologicalReaction direction="left-to-right" evidence="3">
        <dbReference type="Rhea" id="RHEA:47213"/>
    </physiologicalReaction>
</comment>
<comment type="catalytic activity">
    <reaction evidence="3">
        <text>17beta-estradiol + reduced [NADPH--hemoprotein reductase] + O2 = 4-hydroxy-17beta-estradiol + oxidized [NADPH--hemoprotein reductase] + H2O + H(+)</text>
        <dbReference type="Rhea" id="RHEA:47280"/>
        <dbReference type="Rhea" id="RHEA-COMP:11964"/>
        <dbReference type="Rhea" id="RHEA-COMP:11965"/>
        <dbReference type="ChEBI" id="CHEBI:15377"/>
        <dbReference type="ChEBI" id="CHEBI:15378"/>
        <dbReference type="ChEBI" id="CHEBI:15379"/>
        <dbReference type="ChEBI" id="CHEBI:16469"/>
        <dbReference type="ChEBI" id="CHEBI:57618"/>
        <dbReference type="ChEBI" id="CHEBI:58210"/>
        <dbReference type="ChEBI" id="CHEBI:62845"/>
    </reaction>
    <physiologicalReaction direction="left-to-right" evidence="3">
        <dbReference type="Rhea" id="RHEA:47281"/>
    </physiologicalReaction>
</comment>
<comment type="catalytic activity">
    <reaction evidence="3">
        <text>17beta-estradiol + reduced [NADPH--hemoprotein reductase] + O2 = 6alpha-hydroxy-17beta-estradiol + oxidized [NADPH--hemoprotein reductase] + H2O + H(+)</text>
        <dbReference type="Rhea" id="RHEA:47284"/>
        <dbReference type="Rhea" id="RHEA-COMP:11964"/>
        <dbReference type="Rhea" id="RHEA-COMP:11965"/>
        <dbReference type="ChEBI" id="CHEBI:15377"/>
        <dbReference type="ChEBI" id="CHEBI:15378"/>
        <dbReference type="ChEBI" id="CHEBI:15379"/>
        <dbReference type="ChEBI" id="CHEBI:16469"/>
        <dbReference type="ChEBI" id="CHEBI:57618"/>
        <dbReference type="ChEBI" id="CHEBI:58210"/>
        <dbReference type="ChEBI" id="CHEBI:62847"/>
    </reaction>
    <physiologicalReaction direction="left-to-right" evidence="3">
        <dbReference type="Rhea" id="RHEA:47285"/>
    </physiologicalReaction>
</comment>
<comment type="catalytic activity">
    <reaction evidence="3">
        <text>17beta-estradiol + reduced [NADPH--hemoprotein reductase] + O2 = 7alpha-hydroxy-17beta-estradiol + oxidized [NADPH--hemoprotein reductase] + H2O + H(+)</text>
        <dbReference type="Rhea" id="RHEA:47288"/>
        <dbReference type="Rhea" id="RHEA-COMP:11964"/>
        <dbReference type="Rhea" id="RHEA-COMP:11965"/>
        <dbReference type="ChEBI" id="CHEBI:15377"/>
        <dbReference type="ChEBI" id="CHEBI:15378"/>
        <dbReference type="ChEBI" id="CHEBI:15379"/>
        <dbReference type="ChEBI" id="CHEBI:16469"/>
        <dbReference type="ChEBI" id="CHEBI:57618"/>
        <dbReference type="ChEBI" id="CHEBI:58210"/>
        <dbReference type="ChEBI" id="CHEBI:87598"/>
    </reaction>
    <physiologicalReaction direction="left-to-right" evidence="3">
        <dbReference type="Rhea" id="RHEA:47289"/>
    </physiologicalReaction>
</comment>
<comment type="catalytic activity">
    <reaction evidence="3">
        <text>17beta-estradiol + reduced [NADPH--hemoprotein reductase] + O2 = 15alpha-hydroxy-17beta-estradiol + oxidized [NADPH--hemoprotein reductase] + H2O + H(+)</text>
        <dbReference type="Rhea" id="RHEA:47276"/>
        <dbReference type="Rhea" id="RHEA-COMP:11964"/>
        <dbReference type="Rhea" id="RHEA-COMP:11965"/>
        <dbReference type="ChEBI" id="CHEBI:15377"/>
        <dbReference type="ChEBI" id="CHEBI:15378"/>
        <dbReference type="ChEBI" id="CHEBI:15379"/>
        <dbReference type="ChEBI" id="CHEBI:16469"/>
        <dbReference type="ChEBI" id="CHEBI:57618"/>
        <dbReference type="ChEBI" id="CHEBI:58210"/>
        <dbReference type="ChEBI" id="CHEBI:87593"/>
    </reaction>
    <physiologicalReaction direction="left-to-right" evidence="3">
        <dbReference type="Rhea" id="RHEA:47277"/>
    </physiologicalReaction>
</comment>
<comment type="catalytic activity">
    <reaction evidence="3">
        <text>(5Z,8Z,11Z)-eicosatrienoate + reduced [NADPH--hemoprotein reductase] + O2 = 19-hydroxy-(5Z,8Z,11Z)-eicosatrienoate + oxidized [NADPH--hemoprotein reductase] + H2O + H(+)</text>
        <dbReference type="Rhea" id="RHEA:50076"/>
        <dbReference type="Rhea" id="RHEA-COMP:11964"/>
        <dbReference type="Rhea" id="RHEA-COMP:11965"/>
        <dbReference type="ChEBI" id="CHEBI:15377"/>
        <dbReference type="ChEBI" id="CHEBI:15378"/>
        <dbReference type="ChEBI" id="CHEBI:15379"/>
        <dbReference type="ChEBI" id="CHEBI:57618"/>
        <dbReference type="ChEBI" id="CHEBI:58210"/>
        <dbReference type="ChEBI" id="CHEBI:78043"/>
        <dbReference type="ChEBI" id="CHEBI:132024"/>
    </reaction>
    <physiologicalReaction direction="left-to-right" evidence="3">
        <dbReference type="Rhea" id="RHEA:50077"/>
    </physiologicalReaction>
</comment>
<comment type="catalytic activity">
    <reaction evidence="3">
        <text>(5Z,8Z,11Z,14Z)-eicosatetraenoate + reduced [NADPH--hemoprotein reductase] + O2 = 16-hydroxy-(5Z,8Z,11Z,14Z)-eicosatetraenoate + oxidized [NADPH--hemoprotein reductase] + H2O + H(+)</text>
        <dbReference type="Rhea" id="RHEA:49972"/>
        <dbReference type="Rhea" id="RHEA-COMP:11964"/>
        <dbReference type="Rhea" id="RHEA-COMP:11965"/>
        <dbReference type="ChEBI" id="CHEBI:15377"/>
        <dbReference type="ChEBI" id="CHEBI:15378"/>
        <dbReference type="ChEBI" id="CHEBI:15379"/>
        <dbReference type="ChEBI" id="CHEBI:32395"/>
        <dbReference type="ChEBI" id="CHEBI:57618"/>
        <dbReference type="ChEBI" id="CHEBI:58210"/>
        <dbReference type="ChEBI" id="CHEBI:132019"/>
    </reaction>
    <physiologicalReaction direction="left-to-right" evidence="3">
        <dbReference type="Rhea" id="RHEA:49973"/>
    </physiologicalReaction>
</comment>
<comment type="catalytic activity">
    <reaction evidence="3">
        <text>(5Z,8Z,11Z,14Z)-eicosatetraenoate + reduced [NADPH--hemoprotein reductase] + O2 = 17-hydroxy-(5Z,8Z,11Z,14Z)-eicosatetraenoate + oxidized [NADPH--hemoprotein reductase] + H2O + H(+)</text>
        <dbReference type="Rhea" id="RHEA:49968"/>
        <dbReference type="Rhea" id="RHEA-COMP:11964"/>
        <dbReference type="Rhea" id="RHEA-COMP:11965"/>
        <dbReference type="ChEBI" id="CHEBI:15377"/>
        <dbReference type="ChEBI" id="CHEBI:15378"/>
        <dbReference type="ChEBI" id="CHEBI:15379"/>
        <dbReference type="ChEBI" id="CHEBI:32395"/>
        <dbReference type="ChEBI" id="CHEBI:57618"/>
        <dbReference type="ChEBI" id="CHEBI:58210"/>
        <dbReference type="ChEBI" id="CHEBI:132016"/>
    </reaction>
    <physiologicalReaction direction="left-to-right" evidence="3">
        <dbReference type="Rhea" id="RHEA:49969"/>
    </physiologicalReaction>
</comment>
<comment type="catalytic activity">
    <reaction evidence="3">
        <text>(5Z,8Z,11Z,14Z)-eicosatetraenoate + reduced [NADPH--hemoprotein reductase] + O2 = 18-hydroxy-(5Z,8Z,11Z,14Z)-eicosatetraenoate + oxidized [NADPH--hemoprotein reductase] + H2O + H(+)</text>
        <dbReference type="Rhea" id="RHEA:39811"/>
        <dbReference type="Rhea" id="RHEA-COMP:11964"/>
        <dbReference type="Rhea" id="RHEA-COMP:11965"/>
        <dbReference type="ChEBI" id="CHEBI:15377"/>
        <dbReference type="ChEBI" id="CHEBI:15378"/>
        <dbReference type="ChEBI" id="CHEBI:15379"/>
        <dbReference type="ChEBI" id="CHEBI:32395"/>
        <dbReference type="ChEBI" id="CHEBI:57618"/>
        <dbReference type="ChEBI" id="CHEBI:58210"/>
        <dbReference type="ChEBI" id="CHEBI:63590"/>
    </reaction>
    <physiologicalReaction direction="left-to-right" evidence="3">
        <dbReference type="Rhea" id="RHEA:39812"/>
    </physiologicalReaction>
</comment>
<comment type="catalytic activity">
    <reaction evidence="3">
        <text>(5Z,8Z,11Z,14Z)-eicosatetraenoate + reduced [NADPH--hemoprotein reductase] + O2 = 19-hydroxy-(5Z,8Z,11Z,14Z)-eicosatetraenoate + oxidized [NADPH--hemoprotein reductase] + H2O + H(+)</text>
        <dbReference type="Rhea" id="RHEA:39759"/>
        <dbReference type="Rhea" id="RHEA-COMP:11964"/>
        <dbReference type="Rhea" id="RHEA-COMP:11965"/>
        <dbReference type="ChEBI" id="CHEBI:15377"/>
        <dbReference type="ChEBI" id="CHEBI:15378"/>
        <dbReference type="ChEBI" id="CHEBI:15379"/>
        <dbReference type="ChEBI" id="CHEBI:32395"/>
        <dbReference type="ChEBI" id="CHEBI:57618"/>
        <dbReference type="ChEBI" id="CHEBI:58210"/>
        <dbReference type="ChEBI" id="CHEBI:76627"/>
    </reaction>
    <physiologicalReaction direction="left-to-right" evidence="3">
        <dbReference type="Rhea" id="RHEA:39760"/>
    </physiologicalReaction>
</comment>
<comment type="catalytic activity">
    <reaction evidence="3">
        <text>(5Z,8Z,11Z,14Z,17Z)-eicosapentaenoate + reduced [NADPH--hemoprotein reductase] + O2 = 19-hydroxy-(5Z,8Z,11Z,14Z,17Z)-eicosapentaenoate + oxidized [NADPH--hemoprotein reductase] + H2O + H(+)</text>
        <dbReference type="Rhea" id="RHEA:39787"/>
        <dbReference type="Rhea" id="RHEA-COMP:11964"/>
        <dbReference type="Rhea" id="RHEA-COMP:11965"/>
        <dbReference type="ChEBI" id="CHEBI:15377"/>
        <dbReference type="ChEBI" id="CHEBI:15378"/>
        <dbReference type="ChEBI" id="CHEBI:15379"/>
        <dbReference type="ChEBI" id="CHEBI:57618"/>
        <dbReference type="ChEBI" id="CHEBI:58210"/>
        <dbReference type="ChEBI" id="CHEBI:58562"/>
        <dbReference type="ChEBI" id="CHEBI:76636"/>
    </reaction>
    <physiologicalReaction direction="left-to-right" evidence="3">
        <dbReference type="Rhea" id="RHEA:39788"/>
    </physiologicalReaction>
</comment>
<comment type="catalytic activity">
    <reaction evidence="3">
        <text>(5Z,8Z,11Z,14Z)-eicosatetraenoate + reduced [NADPH--hemoprotein reductase] + O2 = (8R,9S)-epoxy-(5Z,11Z,14Z)-eicosatrienoate + oxidized [NADPH--hemoprotein reductase] + H2O + H(+)</text>
        <dbReference type="Rhea" id="RHEA:49884"/>
        <dbReference type="Rhea" id="RHEA-COMP:11964"/>
        <dbReference type="Rhea" id="RHEA-COMP:11965"/>
        <dbReference type="ChEBI" id="CHEBI:15377"/>
        <dbReference type="ChEBI" id="CHEBI:15378"/>
        <dbReference type="ChEBI" id="CHEBI:15379"/>
        <dbReference type="ChEBI" id="CHEBI:32395"/>
        <dbReference type="ChEBI" id="CHEBI:57618"/>
        <dbReference type="ChEBI" id="CHEBI:58210"/>
        <dbReference type="ChEBI" id="CHEBI:131975"/>
    </reaction>
    <physiologicalReaction direction="left-to-right" evidence="3">
        <dbReference type="Rhea" id="RHEA:49885"/>
    </physiologicalReaction>
</comment>
<comment type="catalytic activity">
    <reaction evidence="3">
        <text>(5Z,8Z,11Z,14Z)-eicosatetraenoate + reduced [NADPH--hemoprotein reductase] + O2 = (11R,12S)-epoxy-(5Z,8Z,14Z)-eicosatrienoate + oxidized [NADPH--hemoprotein reductase] + H2O + H(+)</text>
        <dbReference type="Rhea" id="RHEA:49880"/>
        <dbReference type="Rhea" id="RHEA-COMP:11964"/>
        <dbReference type="Rhea" id="RHEA-COMP:11965"/>
        <dbReference type="ChEBI" id="CHEBI:15377"/>
        <dbReference type="ChEBI" id="CHEBI:15378"/>
        <dbReference type="ChEBI" id="CHEBI:15379"/>
        <dbReference type="ChEBI" id="CHEBI:32395"/>
        <dbReference type="ChEBI" id="CHEBI:57618"/>
        <dbReference type="ChEBI" id="CHEBI:58210"/>
        <dbReference type="ChEBI" id="CHEBI:131970"/>
    </reaction>
    <physiologicalReaction direction="left-to-right" evidence="3">
        <dbReference type="Rhea" id="RHEA:49881"/>
    </physiologicalReaction>
</comment>
<comment type="catalytic activity">
    <reaction evidence="3">
        <text>(5Z,8Z,11Z,14Z)-eicosatetraenoate + reduced [NADPH--hemoprotein reductase] + O2 = (14S,15R)-epoxy-(5Z,8Z,11Z)-eicosatrienoate + oxidized [NADPH--hemoprotein reductase] + H2O + H(+)</text>
        <dbReference type="Rhea" id="RHEA:49856"/>
        <dbReference type="Rhea" id="RHEA-COMP:11964"/>
        <dbReference type="Rhea" id="RHEA-COMP:11965"/>
        <dbReference type="ChEBI" id="CHEBI:15377"/>
        <dbReference type="ChEBI" id="CHEBI:15378"/>
        <dbReference type="ChEBI" id="CHEBI:15379"/>
        <dbReference type="ChEBI" id="CHEBI:32395"/>
        <dbReference type="ChEBI" id="CHEBI:57618"/>
        <dbReference type="ChEBI" id="CHEBI:58210"/>
        <dbReference type="ChEBI" id="CHEBI:131964"/>
    </reaction>
    <physiologicalReaction direction="left-to-right" evidence="3">
        <dbReference type="Rhea" id="RHEA:49857"/>
    </physiologicalReaction>
</comment>
<comment type="catalytic activity">
    <reaction evidence="3">
        <text>(5Z,8Z,11Z,14Z)-eicosatetraenoate + reduced [NADPH--hemoprotein reductase] + O2 = (14R,15S)-epoxy-(5Z,8Z,11Z)-eicosatrienoate + oxidized [NADPH--hemoprotein reductase] + H2O + H(+)</text>
        <dbReference type="Rhea" id="RHEA:49860"/>
        <dbReference type="Rhea" id="RHEA-COMP:11964"/>
        <dbReference type="Rhea" id="RHEA-COMP:11965"/>
        <dbReference type="ChEBI" id="CHEBI:15377"/>
        <dbReference type="ChEBI" id="CHEBI:15378"/>
        <dbReference type="ChEBI" id="CHEBI:15379"/>
        <dbReference type="ChEBI" id="CHEBI:32395"/>
        <dbReference type="ChEBI" id="CHEBI:57618"/>
        <dbReference type="ChEBI" id="CHEBI:58210"/>
        <dbReference type="ChEBI" id="CHEBI:131965"/>
    </reaction>
    <physiologicalReaction direction="left-to-right" evidence="3">
        <dbReference type="Rhea" id="RHEA:49861"/>
    </physiologicalReaction>
</comment>
<comment type="catalytic activity">
    <reaction evidence="3">
        <text>(5Z,8Z,11Z,14Z,17Z)-eicosapentaenoate + reduced [NADPH--hemoprotein reductase] + O2 = (17R,18S)-epoxy-(5Z,8Z,11Z,14Z)-eicosatetraenoate + oxidized [NADPH--hemoprotein reductase] + H2O + H(+)</text>
        <dbReference type="Rhea" id="RHEA:39779"/>
        <dbReference type="Rhea" id="RHEA-COMP:11964"/>
        <dbReference type="Rhea" id="RHEA-COMP:11965"/>
        <dbReference type="ChEBI" id="CHEBI:15377"/>
        <dbReference type="ChEBI" id="CHEBI:15378"/>
        <dbReference type="ChEBI" id="CHEBI:15379"/>
        <dbReference type="ChEBI" id="CHEBI:57618"/>
        <dbReference type="ChEBI" id="CHEBI:58210"/>
        <dbReference type="ChEBI" id="CHEBI:58562"/>
        <dbReference type="ChEBI" id="CHEBI:76634"/>
    </reaction>
    <physiologicalReaction direction="left-to-right" evidence="3">
        <dbReference type="Rhea" id="RHEA:39780"/>
    </physiologicalReaction>
</comment>
<comment type="catalytic activity">
    <reaction evidence="3">
        <text>(4Z,7Z,10Z,13Z,16Z,19Z)-docosahexaenoate + reduced [NADPH--hemoprotein reductase] + O2 = (19S,20R)-epoxy-(4Z,7Z,10Z,13Z,16Z)-docosapentaenoate + oxidized [NADPH--hemoprotein reductase] + H2O + H(+)</text>
        <dbReference type="Rhea" id="RHEA:52124"/>
        <dbReference type="Rhea" id="RHEA-COMP:11964"/>
        <dbReference type="Rhea" id="RHEA-COMP:11965"/>
        <dbReference type="ChEBI" id="CHEBI:15377"/>
        <dbReference type="ChEBI" id="CHEBI:15378"/>
        <dbReference type="ChEBI" id="CHEBI:15379"/>
        <dbReference type="ChEBI" id="CHEBI:57618"/>
        <dbReference type="ChEBI" id="CHEBI:58210"/>
        <dbReference type="ChEBI" id="CHEBI:77016"/>
        <dbReference type="ChEBI" id="CHEBI:136411"/>
    </reaction>
    <physiologicalReaction direction="left-to-right" evidence="3">
        <dbReference type="Rhea" id="RHEA:52125"/>
    </physiologicalReaction>
</comment>
<comment type="catalytic activity">
    <reaction evidence="3">
        <text>(4Z,7Z,10Z,13Z,16Z,19Z)-docosahexaenoate + reduced [NADPH--hemoprotein reductase] + O2 = (19R,20S)-epoxy-(4Z,7Z,10Z,13Z,16Z)-docosapentaenoate + oxidized [NADPH--hemoprotein reductase] + H2O + H(+)</text>
        <dbReference type="Rhea" id="RHEA:52120"/>
        <dbReference type="Rhea" id="RHEA-COMP:11964"/>
        <dbReference type="Rhea" id="RHEA-COMP:11965"/>
        <dbReference type="ChEBI" id="CHEBI:15377"/>
        <dbReference type="ChEBI" id="CHEBI:15378"/>
        <dbReference type="ChEBI" id="CHEBI:15379"/>
        <dbReference type="ChEBI" id="CHEBI:57618"/>
        <dbReference type="ChEBI" id="CHEBI:58210"/>
        <dbReference type="ChEBI" id="CHEBI:77016"/>
        <dbReference type="ChEBI" id="CHEBI:136410"/>
    </reaction>
    <physiologicalReaction direction="left-to-right" evidence="3">
        <dbReference type="Rhea" id="RHEA:52121"/>
    </physiologicalReaction>
</comment>
<comment type="catalytic activity">
    <reaction evidence="3">
        <text>all-trans-retinol + reduced [NADPH--hemoprotein reductase] + O2 = all-trans-retinal + oxidized [NADPH--hemoprotein reductase] + 2 H2O + H(+)</text>
        <dbReference type="Rhea" id="RHEA:42092"/>
        <dbReference type="Rhea" id="RHEA-COMP:11964"/>
        <dbReference type="Rhea" id="RHEA-COMP:11965"/>
        <dbReference type="ChEBI" id="CHEBI:15377"/>
        <dbReference type="ChEBI" id="CHEBI:15378"/>
        <dbReference type="ChEBI" id="CHEBI:15379"/>
        <dbReference type="ChEBI" id="CHEBI:17336"/>
        <dbReference type="ChEBI" id="CHEBI:17898"/>
        <dbReference type="ChEBI" id="CHEBI:57618"/>
        <dbReference type="ChEBI" id="CHEBI:58210"/>
    </reaction>
    <physiologicalReaction direction="left-to-right" evidence="3">
        <dbReference type="Rhea" id="RHEA:42093"/>
    </physiologicalReaction>
</comment>
<comment type="catalytic activity">
    <reaction evidence="3">
        <text>all-trans-retinal + reduced [NADPH--hemoprotein reductase] + O2 = all-trans-retinoate + oxidized [NADPH--hemoprotein reductase] + H2O + 2 H(+)</text>
        <dbReference type="Rhea" id="RHEA:42088"/>
        <dbReference type="Rhea" id="RHEA-COMP:11964"/>
        <dbReference type="Rhea" id="RHEA-COMP:11965"/>
        <dbReference type="ChEBI" id="CHEBI:15377"/>
        <dbReference type="ChEBI" id="CHEBI:15378"/>
        <dbReference type="ChEBI" id="CHEBI:15379"/>
        <dbReference type="ChEBI" id="CHEBI:17898"/>
        <dbReference type="ChEBI" id="CHEBI:35291"/>
        <dbReference type="ChEBI" id="CHEBI:57618"/>
        <dbReference type="ChEBI" id="CHEBI:58210"/>
    </reaction>
    <physiologicalReaction direction="left-to-right" evidence="3">
        <dbReference type="Rhea" id="RHEA:42089"/>
    </physiologicalReaction>
</comment>
<comment type="catalytic activity">
    <reaction evidence="3">
        <text>(13S)-hydroperoxy-(9Z,11E)-octadecadienoate = 13-oxo-(9Z,11E)-octadecadienoate + H2O</text>
        <dbReference type="Rhea" id="RHEA:48716"/>
        <dbReference type="ChEBI" id="CHEBI:15377"/>
        <dbReference type="ChEBI" id="CHEBI:57466"/>
        <dbReference type="ChEBI" id="CHEBI:90781"/>
    </reaction>
    <physiologicalReaction direction="left-to-right" evidence="3">
        <dbReference type="Rhea" id="RHEA:48717"/>
    </physiologicalReaction>
</comment>
<comment type="catalytic activity">
    <reaction evidence="3">
        <text>(12S)-hydroperoxy-(5Z,8Z,10E,14Z)-eicosatetraenoate = 12-oxo-(5Z,8Z,10E,14Z)-eicosatetraenoate + H2O</text>
        <dbReference type="Rhea" id="RHEA:37947"/>
        <dbReference type="ChEBI" id="CHEBI:15377"/>
        <dbReference type="ChEBI" id="CHEBI:57444"/>
        <dbReference type="ChEBI" id="CHEBI:75231"/>
        <dbReference type="EC" id="4.2.1.152"/>
    </reaction>
    <physiologicalReaction direction="left-to-right" evidence="3">
        <dbReference type="Rhea" id="RHEA:37948"/>
    </physiologicalReaction>
</comment>
<comment type="catalytic activity">
    <reaction evidence="3">
        <text>(15S)-hydroperoxy-(5Z,8Z,11Z,13E)-eicosatetraenoate = 15-oxo-(5Z,8Z,11Z,13E)-eicosatetraenoate + H2O</text>
        <dbReference type="Rhea" id="RHEA:48636"/>
        <dbReference type="ChEBI" id="CHEBI:15377"/>
        <dbReference type="ChEBI" id="CHEBI:57410"/>
        <dbReference type="ChEBI" id="CHEBI:57446"/>
    </reaction>
    <physiologicalReaction direction="left-to-right" evidence="3">
        <dbReference type="Rhea" id="RHEA:48637"/>
    </physiologicalReaction>
</comment>
<comment type="catalytic activity">
    <reaction evidence="3">
        <text>(5S)-hydroperoxy-(6E,8Z,11Z,14Z)-eicosatetraenoate = 5-oxo-(6E,8Z,11Z,14Z)-eicosatetraenoate + H2O</text>
        <dbReference type="Rhea" id="RHEA:48632"/>
        <dbReference type="ChEBI" id="CHEBI:15377"/>
        <dbReference type="ChEBI" id="CHEBI:57450"/>
        <dbReference type="ChEBI" id="CHEBI:65342"/>
    </reaction>
    <physiologicalReaction direction="left-to-right" evidence="3">
        <dbReference type="Rhea" id="RHEA:48633"/>
    </physiologicalReaction>
</comment>
<comment type="cofactor">
    <cofactor evidence="1">
        <name>heme</name>
        <dbReference type="ChEBI" id="CHEBI:30413"/>
    </cofactor>
</comment>
<comment type="pathway">
    <text evidence="3">Steroid hormone biosynthesis.</text>
</comment>
<comment type="pathway">
    <text evidence="3">Lipid metabolism; fatty acid metabolism.</text>
</comment>
<comment type="pathway">
    <text evidence="3">Cofactor metabolism; retinol metabolism.</text>
</comment>
<comment type="subunit">
    <text evidence="2">Interacts with cytosolic chaperones HSP70 and HSP90; this interaction is required for initial targeting to mitochondria. Interacts (via mitochondrial targeting signal) with TOMM40 (via N-terminus); this interaction is required for translocation across the mitochondrial outer membrane.</text>
</comment>
<comment type="subcellular location">
    <subcellularLocation>
        <location evidence="2">Endoplasmic reticulum membrane</location>
        <topology evidence="2">Peripheral membrane protein</topology>
    </subcellularLocation>
    <subcellularLocation>
        <location evidence="2">Mitochondrion inner membrane</location>
        <topology evidence="2">Peripheral membrane protein</topology>
    </subcellularLocation>
    <subcellularLocation>
        <location evidence="2">Microsome membrane</location>
        <topology evidence="2">Peripheral membrane protein</topology>
    </subcellularLocation>
    <subcellularLocation>
        <location evidence="2">Cytoplasm</location>
    </subcellularLocation>
</comment>
<comment type="induction">
    <text>By 3-methylcholanthrene (3MC).</text>
</comment>
<comment type="similarity">
    <text evidence="4">Belongs to the cytochrome P450 family.</text>
</comment>
<keyword id="KW-0963">Cytoplasm</keyword>
<keyword id="KW-0256">Endoplasmic reticulum</keyword>
<keyword id="KW-0325">Glycoprotein</keyword>
<keyword id="KW-0349">Heme</keyword>
<keyword id="KW-0408">Iron</keyword>
<keyword id="KW-0444">Lipid biosynthesis</keyword>
<keyword id="KW-0443">Lipid metabolism</keyword>
<keyword id="KW-0456">Lyase</keyword>
<keyword id="KW-0472">Membrane</keyword>
<keyword id="KW-0479">Metal-binding</keyword>
<keyword id="KW-0492">Microsome</keyword>
<keyword id="KW-0496">Mitochondrion</keyword>
<keyword id="KW-0999">Mitochondrion inner membrane</keyword>
<keyword id="KW-0503">Monooxygenase</keyword>
<keyword id="KW-0560">Oxidoreductase</keyword>
<keyword id="KW-1185">Reference proteome</keyword>
<keyword id="KW-0752">Steroid biosynthesis</keyword>
<organism>
    <name type="scientific">Mesocricetus auratus</name>
    <name type="common">Golden hamster</name>
    <dbReference type="NCBI Taxonomy" id="10036"/>
    <lineage>
        <taxon>Eukaryota</taxon>
        <taxon>Metazoa</taxon>
        <taxon>Chordata</taxon>
        <taxon>Craniata</taxon>
        <taxon>Vertebrata</taxon>
        <taxon>Euteleostomi</taxon>
        <taxon>Mammalia</taxon>
        <taxon>Eutheria</taxon>
        <taxon>Euarchontoglires</taxon>
        <taxon>Glires</taxon>
        <taxon>Rodentia</taxon>
        <taxon>Myomorpha</taxon>
        <taxon>Muroidea</taxon>
        <taxon>Cricetidae</taxon>
        <taxon>Cricetinae</taxon>
        <taxon>Mesocricetus</taxon>
    </lineage>
</organism>